<organism>
    <name type="scientific">Homo sapiens</name>
    <name type="common">Human</name>
    <dbReference type="NCBI Taxonomy" id="9606"/>
    <lineage>
        <taxon>Eukaryota</taxon>
        <taxon>Metazoa</taxon>
        <taxon>Chordata</taxon>
        <taxon>Craniata</taxon>
        <taxon>Vertebrata</taxon>
        <taxon>Euteleostomi</taxon>
        <taxon>Mammalia</taxon>
        <taxon>Eutheria</taxon>
        <taxon>Euarchontoglires</taxon>
        <taxon>Primates</taxon>
        <taxon>Haplorrhini</taxon>
        <taxon>Catarrhini</taxon>
        <taxon>Hominidae</taxon>
        <taxon>Homo</taxon>
    </lineage>
</organism>
<sequence length="2623" mass="290838">MKVKGRGITCLLVSFAVICLVATPGGKACPRRCACYMPTEVHCTFRYLTSIPDSIPPNVERINLGYNSLVRLMETDFSGLTKLELLMLHSNGIHTIPDKTFSDLQALQVLKMSYNKVRKLQKDTFYGLRSLTRLHMDHNNIEFINPEVFYGLNFLRLVHLEGNQLTKLHPDTFVSLSYLQIFKISFIKFLYLSDNFLTSLPQEMVSYMPDLDSLYLHGNPWTCDCHLKWLSDWIQEKPDVIKCKKDRSPSSAQQCPLCMNPRTSKGKPLAMVSAAAFQCAKPTIDSSLKSKSLTILEDSSSAFISPQGFMAPFGSLTLNMTDQSGNEANMVCSIQKPSRTSPIAFTEENDYIVLNTSFSTFLVCNIDYGHIQPVWQILALYSDSPLILERSHLLSETPQLYYKYKQVAPKPEDIFTNIEADLRADPSWLMQDQISLQLNRTATTFSTLQIQYSSDAQITLPRAEMRPVKHKWTMISRDNNTKLEHTVLVGGTVGLNCPGQGDPTPHVDWLLADGSKVRAPYVSEDGRILIDKSGKLELQMADSFDTGVYHCISSNYDDADILTYRITVVEPLVEAYQENGIHHTVFIGETLDLPCHSTGIPDASISWVIPGNNVLYQSSRDKKVLNNGTLRILQVTPKDQGYYRCVAANPSGVDFLIFQVSVKMKGQRPLEHDGETEGSGLDESNPIAHLKEPPGAQLRTSALMEAEVGKHTSSTSKRHNYRELTLQRRGDSTHRRFRENRRHFPPSARRIDPQHWAALLEKAKKNAMPDKRENTTVSPPPVVTQLPNIPGEEDDSSGMLALHEEFMVPATKALNLPARTVTADSRTISDSPMTNINYGTEFSPVVNSQILPPEEPTDFKLSTAIKTTAMSKNINPTMSSQIQGTTNQHSSTVFPLLLGATEFQDSDQMGRGREHFQSRPPITVRTMIKDVNVKMLSSTTNKLLLESVNTTNSHQTSVREVSEPRHNHFYSHTTQILSTSTFPSDPHTAAHSQFPIPRNSTVNIPLFRRFGRQRKIGGRGRIISPYRTPVLRRHRYSIFRSTTRGSSEKSTTAFSATVLNVTCLSCLPRERLTTATAALSFPSAAPITFPKADIARVPSEESTTLVQNPLLLLENKPSVEKTTPTIKYFRTEISQVTPTGAVMTYAPTSIPMEKTHKVNASYPRVSSTNEAKRDSVITSSLSGAITKPPMTIIAITRFSRRKIPWQQNFVNNHNPKGRLRNQHKVSLQKSTAVMLPKTSPALPRDKVSPFHFTTLSTSVMQIPSNTLTTAHHTTTKTHNPGSLPTKKELPFPPLNPMLPSIISKDSSTKSIISTQTAIPATTPTFPASVITYETQTERSRAQTIQREQEPQKKNRTDPNISPDQSSGFTTPTAMTPPVLTTAETSVKPSVSAFTHSPPENTTGISSTISFHSRTLNLTDVIEELAQASTQTLKSTIASETTLSSKSHQSTTTRKAIIRHSTIPPFLSSSATLMPVPISPPFTQRAVTDNVATPISGLMTNTVVKLHESSRHNAKPQQLVAEVATSPKVHPNAKFTIGTTHFIYSNLLHSTPMPALTTVKSQNSKLTPSPWAENQFWHKPYSEIAEKGKKPEVSMLATTGLSEATTLVSDWDGQKNTKKSDFDKKPVQEATTSKLLPFDSLSRYIFEKPRIVGGKAASFTIPANSDAFLPCEAVGNPLPTIHWTRVPSGLDLSKRKQNSRVQVLPNGTLSIQRVEIQDRGQYLCSASNLFGTDHLHVTLSVVSYPPRILERRTKEITVHSGSTVELKCRAEGRPSPTVTWILANQTVVSESSQGSRQAVVTVDGTLVLHNLSIYDRGFYKCVASNPGGQDSLLVKIQVIAAPPVILEQRRQVIVGTWGESLKLPCTAKGTPQPSVYWVLSDGTEVKPLQFTNSKLFLFSNGTLYIRNLASSDRGTYECIATSSTGSERRVVMLTMEERVTSPRIEAASQKRTEVNFGDKLLLNCSATGEPKPQIMWRLPSKAVVDQQHRVGSWIHVYPNGSLFIGSVTEKDSGVYLCVARNKMGDDLILMHVSLRLKPAKIDHKQYFRKQVLHGKDFQVDCKASGSPVPEISWSLPDGTMINNAMQADDSGHRTRRYTLFNNGTLYFNKVGVAEEGDYTCYAQNTLGKDEMKVHLTVITAAPRIRQSNKTNKRIKAGDTAVLDCEVTGDPKPKIFWLLPSNDMISFSIDRYTFHANGSLTINKVKLLDSGEYVCVARNPSGDDTKMYKLDVVSKPPLINGLYTNRTVIKATAVRHSKKHFDCRAEGTPSPEVMWIMPDNIFLTAPYYGSRITVHKNGTLEIRNVRLSDSADFICVARNEGGESVLVVQLEVLEMLRRPTFRNPFNEKIVAQLGKSTALNCSVDGNPPPEIIWILPNGTRFSNGPQSYQYLIASNGSFIISKTTREDAGKYRCAARNKVGYIEKLVILEIGQKPVILTYAPGTVKGISGESLSLHCVSDGIPKPNIKWTMPSGYVVDRPQINGKYILHDNGTLVIKEATAYDRGNYICKAQNSVGHTLITVPVMIVAYPPRITNRPPRSIVTRTGAAFQLHCVALGVPKPEITWEMPDHSLLSTASKERTHGSEQLHLQGTLVIQNPQTSDSGIYKCTAKNPLGSDYAATYIQVI</sequence>
<evidence type="ECO:0000250" key="1">
    <source>
        <dbReference type="UniProtKB" id="Q3V1M1"/>
    </source>
</evidence>
<evidence type="ECO:0000250" key="2">
    <source>
        <dbReference type="UniProtKB" id="Q6WRH9"/>
    </source>
</evidence>
<evidence type="ECO:0000255" key="3"/>
<evidence type="ECO:0000255" key="4">
    <source>
        <dbReference type="PROSITE-ProRule" id="PRU00114"/>
    </source>
</evidence>
<evidence type="ECO:0000256" key="5">
    <source>
        <dbReference type="SAM" id="MobiDB-lite"/>
    </source>
</evidence>
<evidence type="ECO:0000269" key="6">
    <source>
    </source>
</evidence>
<evidence type="ECO:0000303" key="7">
    <source>
    </source>
</evidence>
<evidence type="ECO:0000303" key="8">
    <source>
    </source>
</evidence>
<evidence type="ECO:0000305" key="9"/>
<reference key="1">
    <citation type="journal article" date="2004" name="Bone">
        <title>CMF608 -- a novel mechanical strain-induced bone-specific protein expressed in early osteochondroprogenitor cells.</title>
        <authorList>
            <person name="Segev O."/>
            <person name="Samach A."/>
            <person name="Faerman A."/>
            <person name="Kalinski H."/>
            <person name="Beiman M."/>
            <person name="Gelfand A."/>
            <person name="Turam H."/>
            <person name="Boguslavsky S."/>
            <person name="Moshayov A."/>
            <person name="Gottlieb H."/>
            <person name="Kazanov E."/>
            <person name="Nevo Z."/>
            <person name="Robinson D."/>
            <person name="Skaliter R."/>
            <person name="Einat P."/>
            <person name="Binderman I."/>
            <person name="Feinstein E."/>
        </authorList>
    </citation>
    <scope>NUCLEOTIDE SEQUENCE [LARGE SCALE MRNA] (ISOFORM 1)</scope>
</reference>
<reference key="2">
    <citation type="journal article" date="2004" name="Nat. Genet.">
        <title>Complete sequencing and characterization of 21,243 full-length human cDNAs.</title>
        <authorList>
            <person name="Ota T."/>
            <person name="Suzuki Y."/>
            <person name="Nishikawa T."/>
            <person name="Otsuki T."/>
            <person name="Sugiyama T."/>
            <person name="Irie R."/>
            <person name="Wakamatsu A."/>
            <person name="Hayashi K."/>
            <person name="Sato H."/>
            <person name="Nagai K."/>
            <person name="Kimura K."/>
            <person name="Makita H."/>
            <person name="Sekine M."/>
            <person name="Obayashi M."/>
            <person name="Nishi T."/>
            <person name="Shibahara T."/>
            <person name="Tanaka T."/>
            <person name="Ishii S."/>
            <person name="Yamamoto J."/>
            <person name="Saito K."/>
            <person name="Kawai Y."/>
            <person name="Isono Y."/>
            <person name="Nakamura Y."/>
            <person name="Nagahari K."/>
            <person name="Murakami K."/>
            <person name="Yasuda T."/>
            <person name="Iwayanagi T."/>
            <person name="Wagatsuma M."/>
            <person name="Shiratori A."/>
            <person name="Sudo H."/>
            <person name="Hosoiri T."/>
            <person name="Kaku Y."/>
            <person name="Kodaira H."/>
            <person name="Kondo H."/>
            <person name="Sugawara M."/>
            <person name="Takahashi M."/>
            <person name="Kanda K."/>
            <person name="Yokoi T."/>
            <person name="Furuya T."/>
            <person name="Kikkawa E."/>
            <person name="Omura Y."/>
            <person name="Abe K."/>
            <person name="Kamihara K."/>
            <person name="Katsuta N."/>
            <person name="Sato K."/>
            <person name="Tanikawa M."/>
            <person name="Yamazaki M."/>
            <person name="Ninomiya K."/>
            <person name="Ishibashi T."/>
            <person name="Yamashita H."/>
            <person name="Murakawa K."/>
            <person name="Fujimori K."/>
            <person name="Tanai H."/>
            <person name="Kimata M."/>
            <person name="Watanabe M."/>
            <person name="Hiraoka S."/>
            <person name="Chiba Y."/>
            <person name="Ishida S."/>
            <person name="Ono Y."/>
            <person name="Takiguchi S."/>
            <person name="Watanabe S."/>
            <person name="Yosida M."/>
            <person name="Hotuta T."/>
            <person name="Kusano J."/>
            <person name="Kanehori K."/>
            <person name="Takahashi-Fujii A."/>
            <person name="Hara H."/>
            <person name="Tanase T.-O."/>
            <person name="Nomura Y."/>
            <person name="Togiya S."/>
            <person name="Komai F."/>
            <person name="Hara R."/>
            <person name="Takeuchi K."/>
            <person name="Arita M."/>
            <person name="Imose N."/>
            <person name="Musashino K."/>
            <person name="Yuuki H."/>
            <person name="Oshima A."/>
            <person name="Sasaki N."/>
            <person name="Aotsuka S."/>
            <person name="Yoshikawa Y."/>
            <person name="Matsunawa H."/>
            <person name="Ichihara T."/>
            <person name="Shiohata N."/>
            <person name="Sano S."/>
            <person name="Moriya S."/>
            <person name="Momiyama H."/>
            <person name="Satoh N."/>
            <person name="Takami S."/>
            <person name="Terashima Y."/>
            <person name="Suzuki O."/>
            <person name="Nakagawa S."/>
            <person name="Senoh A."/>
            <person name="Mizoguchi H."/>
            <person name="Goto Y."/>
            <person name="Shimizu F."/>
            <person name="Wakebe H."/>
            <person name="Hishigaki H."/>
            <person name="Watanabe T."/>
            <person name="Sugiyama A."/>
            <person name="Takemoto M."/>
            <person name="Kawakami B."/>
            <person name="Yamazaki M."/>
            <person name="Watanabe K."/>
            <person name="Kumagai A."/>
            <person name="Itakura S."/>
            <person name="Fukuzumi Y."/>
            <person name="Fujimori Y."/>
            <person name="Komiyama M."/>
            <person name="Tashiro H."/>
            <person name="Tanigami A."/>
            <person name="Fujiwara T."/>
            <person name="Ono T."/>
            <person name="Yamada K."/>
            <person name="Fujii Y."/>
            <person name="Ozaki K."/>
            <person name="Hirao M."/>
            <person name="Ohmori Y."/>
            <person name="Kawabata A."/>
            <person name="Hikiji T."/>
            <person name="Kobatake N."/>
            <person name="Inagaki H."/>
            <person name="Ikema Y."/>
            <person name="Okamoto S."/>
            <person name="Okitani R."/>
            <person name="Kawakami T."/>
            <person name="Noguchi S."/>
            <person name="Itoh T."/>
            <person name="Shigeta K."/>
            <person name="Senba T."/>
            <person name="Matsumura K."/>
            <person name="Nakajima Y."/>
            <person name="Mizuno T."/>
            <person name="Morinaga M."/>
            <person name="Sasaki M."/>
            <person name="Togashi T."/>
            <person name="Oyama M."/>
            <person name="Hata H."/>
            <person name="Watanabe M."/>
            <person name="Komatsu T."/>
            <person name="Mizushima-Sugano J."/>
            <person name="Satoh T."/>
            <person name="Shirai Y."/>
            <person name="Takahashi Y."/>
            <person name="Nakagawa K."/>
            <person name="Okumura K."/>
            <person name="Nagase T."/>
            <person name="Nomura N."/>
            <person name="Kikuchi H."/>
            <person name="Masuho Y."/>
            <person name="Yamashita R."/>
            <person name="Nakai K."/>
            <person name="Yada T."/>
            <person name="Nakamura Y."/>
            <person name="Ohara O."/>
            <person name="Isogai T."/>
            <person name="Sugano S."/>
        </authorList>
    </citation>
    <scope>NUCLEOTIDE SEQUENCE [LARGE SCALE MRNA] (ISOFORM 2)</scope>
    <scope>NUCLEOTIDE SEQUENCE [LARGE SCALE MRNA] OF 2187-2623 (ISOFORM 1)</scope>
    <source>
        <tissue>Testis</tissue>
    </source>
</reference>
<reference key="3">
    <citation type="journal article" date="2004" name="Genome Res.">
        <title>The status, quality, and expansion of the NIH full-length cDNA project: the Mammalian Gene Collection (MGC).</title>
        <authorList>
            <consortium name="The MGC Project Team"/>
        </authorList>
    </citation>
    <scope>NUCLEOTIDE SEQUENCE [LARGE SCALE MRNA] (ISOFORM 3)</scope>
    <source>
        <tissue>Testis</tissue>
    </source>
</reference>
<reference key="4">
    <citation type="journal article" date="2016" name="EMBO Mol. Med.">
        <title>IGSF10 mutations dysregulate gonadotropin-releasing hormone neuronal migration resulting in delayed puberty.</title>
        <authorList>
            <person name="Howard S.R."/>
            <person name="Guasti L."/>
            <person name="Ruiz-Babot G."/>
            <person name="Mancini A."/>
            <person name="David A."/>
            <person name="Storr H.L."/>
            <person name="Metherell L.A."/>
            <person name="Sternberg M.J."/>
            <person name="Cabrera C.P."/>
            <person name="Warren H.R."/>
            <person name="Barnes M.R."/>
            <person name="Quinton R."/>
            <person name="de Roux N."/>
            <person name="Young J."/>
            <person name="Guiochon-Mantel A."/>
            <person name="Wehkalampi K."/>
            <person name="Andre V."/>
            <person name="Gothilf Y."/>
            <person name="Cariboni A."/>
            <person name="Dunkel L."/>
        </authorList>
    </citation>
    <scope>SUBCELLULAR LOCATION</scope>
    <scope>PROBABLE INVOLVEMENT IN SELF-LIMITED DELAYED PUBERTY</scope>
    <scope>VARIANTS LEU-156; LYS-161; GLY-2264 AND ASN-2614</scope>
    <scope>CHARACTERIZATION OF VARIANTS LEU-156 AND LYS-161</scope>
</reference>
<protein>
    <recommendedName>
        <fullName>Immunoglobulin superfamily member 10</fullName>
        <shortName>IgSF10</shortName>
    </recommendedName>
    <alternativeName>
        <fullName>Calvaria mechanical force protein 608</fullName>
        <shortName>CMF608</shortName>
    </alternativeName>
</protein>
<feature type="signal peptide" evidence="3">
    <location>
        <begin position="1"/>
        <end position="28"/>
    </location>
</feature>
<feature type="chain" id="PRO_0000286817" description="Immunoglobulin superfamily member 10">
    <location>
        <begin position="29"/>
        <end position="2623"/>
    </location>
</feature>
<feature type="domain" description="LRRNT">
    <location>
        <begin position="29"/>
        <end position="56"/>
    </location>
</feature>
<feature type="repeat" description="LRR 1">
    <location>
        <begin position="58"/>
        <end position="79"/>
    </location>
</feature>
<feature type="repeat" description="LRR 2">
    <location>
        <begin position="82"/>
        <end position="103"/>
    </location>
</feature>
<feature type="repeat" description="LRR 3">
    <location>
        <begin position="106"/>
        <end position="127"/>
    </location>
</feature>
<feature type="repeat" description="LRR 4">
    <location>
        <begin position="130"/>
        <end position="151"/>
    </location>
</feature>
<feature type="repeat" description="LRR 5">
    <location>
        <begin position="154"/>
        <end position="175"/>
    </location>
</feature>
<feature type="repeat" description="LRR 6">
    <location>
        <begin position="186"/>
        <end position="207"/>
    </location>
</feature>
<feature type="domain" description="LRRCT">
    <location>
        <begin position="219"/>
        <end position="281"/>
    </location>
</feature>
<feature type="domain" description="Ig-like C2-type 1">
    <location>
        <begin position="461"/>
        <end position="567"/>
    </location>
</feature>
<feature type="domain" description="Ig-like C2-type 2">
    <location>
        <begin position="571"/>
        <end position="661"/>
    </location>
</feature>
<feature type="domain" description="Ig-like C2-type 3">
    <location>
        <begin position="1648"/>
        <end position="1739"/>
    </location>
</feature>
<feature type="domain" description="Ig-like C2-type 4">
    <location>
        <begin position="1745"/>
        <end position="1836"/>
    </location>
</feature>
<feature type="domain" description="Ig-like C2-type 5">
    <location>
        <begin position="1841"/>
        <end position="1933"/>
    </location>
</feature>
<feature type="domain" description="Ig-like C2-type 6">
    <location>
        <begin position="1941"/>
        <end position="2034"/>
    </location>
</feature>
<feature type="domain" description="Ig-like C2-type 7">
    <location>
        <begin position="2037"/>
        <end position="2135"/>
    </location>
</feature>
<feature type="domain" description="Ig-like C2-type 8">
    <location>
        <begin position="2141"/>
        <end position="2229"/>
    </location>
</feature>
<feature type="domain" description="Ig-like C2-type 9">
    <location>
        <begin position="2234"/>
        <end position="2331"/>
    </location>
</feature>
<feature type="domain" description="Ig-like C2-type 10">
    <location>
        <begin position="2337"/>
        <end position="2427"/>
    </location>
</feature>
<feature type="domain" description="Ig-like C2-type 11">
    <location>
        <begin position="2432"/>
        <end position="2518"/>
    </location>
</feature>
<feature type="domain" description="Ig-like C2-type 12">
    <location>
        <begin position="2528"/>
        <end position="2623"/>
    </location>
</feature>
<feature type="region of interest" description="Disordered" evidence="5">
    <location>
        <begin position="668"/>
        <end position="692"/>
    </location>
</feature>
<feature type="region of interest" description="Disordered" evidence="5">
    <location>
        <begin position="767"/>
        <end position="788"/>
    </location>
</feature>
<feature type="region of interest" description="Disordered" evidence="5">
    <location>
        <begin position="1334"/>
        <end position="1376"/>
    </location>
</feature>
<feature type="region of interest" description="Disordered" evidence="5">
    <location>
        <begin position="1434"/>
        <end position="1453"/>
    </location>
</feature>
<feature type="compositionally biased region" description="Basic and acidic residues" evidence="5">
    <location>
        <begin position="1335"/>
        <end position="1356"/>
    </location>
</feature>
<feature type="compositionally biased region" description="Polar residues" evidence="5">
    <location>
        <begin position="1357"/>
        <end position="1373"/>
    </location>
</feature>
<feature type="modified residue" description="Phosphotyrosine" evidence="2">
    <location>
        <position position="2603"/>
    </location>
</feature>
<feature type="glycosylation site" description="N-linked (GlcNAc...) asparagine" evidence="3">
    <location>
        <position position="319"/>
    </location>
</feature>
<feature type="glycosylation site" description="N-linked (GlcNAc...) asparagine" evidence="3">
    <location>
        <position position="439"/>
    </location>
</feature>
<feature type="glycosylation site" description="N-linked (GlcNAc...) asparagine" evidence="3">
    <location>
        <position position="627"/>
    </location>
</feature>
<feature type="glycosylation site" description="N-linked (GlcNAc...) asparagine" evidence="3">
    <location>
        <position position="774"/>
    </location>
</feature>
<feature type="glycosylation site" description="N-linked (GlcNAc...) asparagine" evidence="3">
    <location>
        <position position="999"/>
    </location>
</feature>
<feature type="glycosylation site" description="N-linked (GlcNAc...) asparagine" evidence="3">
    <location>
        <position position="1899"/>
    </location>
</feature>
<feature type="glycosylation site" description="N-linked (GlcNAc...) asparagine" evidence="3">
    <location>
        <position position="1962"/>
    </location>
</feature>
<feature type="glycosylation site" description="N-linked (GlcNAc...) asparagine" evidence="3">
    <location>
        <position position="2101"/>
    </location>
</feature>
<feature type="disulfide bond" evidence="4">
    <location>
        <begin position="497"/>
        <end position="551"/>
    </location>
</feature>
<feature type="disulfide bond" evidence="4">
    <location>
        <begin position="595"/>
        <end position="645"/>
    </location>
</feature>
<feature type="disulfide bond" evidence="4">
    <location>
        <begin position="1670"/>
        <end position="1723"/>
    </location>
</feature>
<feature type="disulfide bond" evidence="4">
    <location>
        <begin position="1767"/>
        <end position="1820"/>
    </location>
</feature>
<feature type="disulfide bond" evidence="4">
    <location>
        <begin position="1864"/>
        <end position="1917"/>
    </location>
</feature>
<feature type="disulfide bond" evidence="4">
    <location>
        <begin position="1963"/>
        <end position="2016"/>
    </location>
</feature>
<feature type="disulfide bond" evidence="4">
    <location>
        <begin position="2060"/>
        <end position="2119"/>
    </location>
</feature>
<feature type="disulfide bond" evidence="4">
    <location>
        <begin position="2163"/>
        <end position="2213"/>
    </location>
</feature>
<feature type="disulfide bond" evidence="4">
    <location>
        <begin position="2261"/>
        <end position="2313"/>
    </location>
</feature>
<feature type="disulfide bond" evidence="4">
    <location>
        <begin position="2359"/>
        <end position="2411"/>
    </location>
</feature>
<feature type="disulfide bond" evidence="4">
    <location>
        <begin position="2454"/>
        <end position="2506"/>
    </location>
</feature>
<feature type="disulfide bond" evidence="4">
    <location>
        <begin position="2550"/>
        <end position="2605"/>
    </location>
</feature>
<feature type="splice variant" id="VSP_025194" description="In isoform 3." evidence="8">
    <location>
        <begin position="1"/>
        <end position="2021"/>
    </location>
</feature>
<feature type="splice variant" id="VSP_025195" description="In isoform 2." evidence="7">
    <location>
        <begin position="1"/>
        <end position="1973"/>
    </location>
</feature>
<feature type="splice variant" id="VSP_025196" description="In isoform 2." evidence="7">
    <original>MWRLPSKAVVDQQH</original>
    <variation>MVESVRLENQPCDL</variation>
    <location>
        <begin position="1974"/>
        <end position="1987"/>
    </location>
</feature>
<feature type="sequence variant" id="VAR_032179" description="In dbSNP:rs35953658.">
    <original>T</original>
    <variation>I</variation>
    <location>
        <position position="124"/>
    </location>
</feature>
<feature type="sequence variant" id="VAR_032180" description="In dbSNP:rs7619322.">
    <original>Y</original>
    <variation>D</variation>
    <location>
        <position position="150"/>
    </location>
</feature>
<feature type="sequence variant" id="VAR_078550" description="Found in autosomal dominant self-limited delayed puberty; likely pathogenic; the mutant protein is not secreted; dbSNP:rs138756085." evidence="6">
    <original>R</original>
    <variation>L</variation>
    <location>
        <position position="156"/>
    </location>
</feature>
<feature type="sequence variant" id="VAR_078551" description="Found in autosomal dominant self-limited delayed puberty; likely pathogenic; the mutant protein is not secreted; dbSNP:rs114161831." evidence="6">
    <original>E</original>
    <variation>K</variation>
    <location>
        <position position="161"/>
    </location>
</feature>
<feature type="sequence variant" id="VAR_032181" description="In dbSNP:rs17204557.">
    <original>P</original>
    <variation>S</variation>
    <location>
        <position position="571"/>
    </location>
</feature>
<feature type="sequence variant" id="VAR_061313" description="In dbSNP:rs58583961.">
    <original>D</original>
    <variation>N</variation>
    <location>
        <position position="795"/>
    </location>
</feature>
<feature type="sequence variant" id="VAR_032182" description="In dbSNP:rs16863403.">
    <original>S</original>
    <variation>A</variation>
    <location>
        <position position="1199"/>
    </location>
</feature>
<feature type="sequence variant" id="VAR_032183" description="In dbSNP:rs34933248.">
    <original>T</original>
    <variation>I</variation>
    <location>
        <position position="1370"/>
    </location>
</feature>
<feature type="sequence variant" id="VAR_032184" description="In dbSNP:rs12487205.">
    <original>Y</original>
    <variation>H</variation>
    <location>
        <position position="1875"/>
    </location>
</feature>
<feature type="sequence variant" id="VAR_078552" description="Found in autosomal dominant self-limited delayed puberty; uncertain significance; dbSNP:rs1204847665." evidence="6">
    <original>E</original>
    <variation>G</variation>
    <location>
        <position position="2264"/>
    </location>
</feature>
<feature type="sequence variant" id="VAR_032185" description="In dbSNP:rs3732775.">
    <original>R</original>
    <variation>W</variation>
    <location>
        <position position="2476"/>
    </location>
</feature>
<feature type="sequence variant" id="VAR_032186" description="In dbSNP:rs7624011.">
    <original>H</original>
    <variation>Y</variation>
    <location>
        <position position="2579"/>
    </location>
</feature>
<feature type="sequence variant" id="VAR_078553" description="Found in autosomal dominant self-limited delayed puberty; uncertain significance; dbSNP:rs112889898." evidence="6">
    <original>D</original>
    <variation>N</variation>
    <location>
        <position position="2614"/>
    </location>
</feature>
<feature type="sequence conflict" description="In Ref. 3; AAH31063." evidence="9" ref="3">
    <original>N</original>
    <variation>S</variation>
    <location>
        <position position="2243"/>
    </location>
</feature>
<proteinExistence type="evidence at protein level"/>
<dbReference type="EMBL" id="AY273815">
    <property type="protein sequence ID" value="AAQ16156.1"/>
    <property type="molecule type" value="mRNA"/>
</dbReference>
<dbReference type="EMBL" id="AK093069">
    <property type="protein sequence ID" value="BAC04042.1"/>
    <property type="molecule type" value="mRNA"/>
</dbReference>
<dbReference type="EMBL" id="AK098838">
    <property type="protein sequence ID" value="BAC05429.1"/>
    <property type="status" value="ALT_INIT"/>
    <property type="molecule type" value="mRNA"/>
</dbReference>
<dbReference type="EMBL" id="BC031063">
    <property type="protein sequence ID" value="AAH31063.1"/>
    <property type="molecule type" value="mRNA"/>
</dbReference>
<dbReference type="CCDS" id="CCDS3160.1">
    <molecule id="Q6WRI0-1"/>
</dbReference>
<dbReference type="RefSeq" id="NP_001171616.2">
    <molecule id="Q6WRI0-3"/>
    <property type="nucleotide sequence ID" value="NM_001178145.3"/>
</dbReference>
<dbReference type="RefSeq" id="NP_001171617.1">
    <molecule id="Q6WRI0-3"/>
    <property type="nucleotide sequence ID" value="NM_001178146.3"/>
</dbReference>
<dbReference type="RefSeq" id="NP_001371989.1">
    <molecule id="Q6WRI0-1"/>
    <property type="nucleotide sequence ID" value="NM_001385060.1"/>
</dbReference>
<dbReference type="RefSeq" id="NP_001371990.1">
    <molecule id="Q6WRI0-1"/>
    <property type="nucleotide sequence ID" value="NM_001385061.1"/>
</dbReference>
<dbReference type="RefSeq" id="NP_001371991.1">
    <molecule id="Q6WRI0-1"/>
    <property type="nucleotide sequence ID" value="NM_001385062.1"/>
</dbReference>
<dbReference type="RefSeq" id="NP_001371992.1">
    <molecule id="Q6WRI0-1"/>
    <property type="nucleotide sequence ID" value="NM_001385063.1"/>
</dbReference>
<dbReference type="RefSeq" id="NP_849144.2">
    <molecule id="Q6WRI0-1"/>
    <property type="nucleotide sequence ID" value="NM_178822.4"/>
</dbReference>
<dbReference type="RefSeq" id="XP_011511011.1">
    <molecule id="Q6WRI0-1"/>
    <property type="nucleotide sequence ID" value="XM_011512709.3"/>
</dbReference>
<dbReference type="RefSeq" id="XP_047303972.1">
    <molecule id="Q6WRI0-3"/>
    <property type="nucleotide sequence ID" value="XM_047448016.1"/>
</dbReference>
<dbReference type="RefSeq" id="XP_054202274.1">
    <molecule id="Q6WRI0-3"/>
    <property type="nucleotide sequence ID" value="XM_054346299.1"/>
</dbReference>
<dbReference type="SMR" id="Q6WRI0"/>
<dbReference type="BioGRID" id="130074">
    <property type="interactions" value="14"/>
</dbReference>
<dbReference type="FunCoup" id="Q6WRI0">
    <property type="interactions" value="154"/>
</dbReference>
<dbReference type="IntAct" id="Q6WRI0">
    <property type="interactions" value="1"/>
</dbReference>
<dbReference type="STRING" id="9606.ENSP00000282466"/>
<dbReference type="DrugBank" id="DB00114">
    <property type="generic name" value="Pyridoxal phosphate"/>
</dbReference>
<dbReference type="CarbonylDB" id="Q6WRI0"/>
<dbReference type="GlyCosmos" id="Q6WRI0">
    <property type="glycosylation" value="10 sites, 1 glycan"/>
</dbReference>
<dbReference type="GlyGen" id="Q6WRI0">
    <property type="glycosylation" value="21 sites, 5 N-linked glycans (6 sites), 3 O-linked glycans (8 sites)"/>
</dbReference>
<dbReference type="iPTMnet" id="Q6WRI0"/>
<dbReference type="PhosphoSitePlus" id="Q6WRI0"/>
<dbReference type="SwissPalm" id="Q6WRI0"/>
<dbReference type="BioMuta" id="IGSF10"/>
<dbReference type="DMDM" id="74749492"/>
<dbReference type="jPOST" id="Q6WRI0"/>
<dbReference type="MassIVE" id="Q6WRI0"/>
<dbReference type="PaxDb" id="9606-ENSP00000282466"/>
<dbReference type="PeptideAtlas" id="Q6WRI0"/>
<dbReference type="ProteomicsDB" id="67774">
    <molecule id="Q6WRI0-1"/>
</dbReference>
<dbReference type="ProteomicsDB" id="67775">
    <molecule id="Q6WRI0-2"/>
</dbReference>
<dbReference type="ProteomicsDB" id="67776">
    <molecule id="Q6WRI0-3"/>
</dbReference>
<dbReference type="Pumba" id="Q6WRI0"/>
<dbReference type="Antibodypedia" id="2541">
    <property type="antibodies" value="62 antibodies from 15 providers"/>
</dbReference>
<dbReference type="DNASU" id="285313"/>
<dbReference type="Ensembl" id="ENST00000282466.4">
    <molecule id="Q6WRI0-1"/>
    <property type="protein sequence ID" value="ENSP00000282466.3"/>
    <property type="gene ID" value="ENSG00000152580.9"/>
</dbReference>
<dbReference type="GeneID" id="285313"/>
<dbReference type="KEGG" id="hsa:285313"/>
<dbReference type="MANE-Select" id="ENST00000282466.4">
    <property type="protein sequence ID" value="ENSP00000282466.3"/>
    <property type="RefSeq nucleotide sequence ID" value="NM_178822.5"/>
    <property type="RefSeq protein sequence ID" value="NP_849144.2"/>
</dbReference>
<dbReference type="UCSC" id="uc011bod.3">
    <molecule id="Q6WRI0-1"/>
    <property type="organism name" value="human"/>
</dbReference>
<dbReference type="AGR" id="HGNC:26384"/>
<dbReference type="CTD" id="285313"/>
<dbReference type="DisGeNET" id="285313"/>
<dbReference type="GeneCards" id="IGSF10"/>
<dbReference type="HGNC" id="HGNC:26384">
    <property type="gene designation" value="IGSF10"/>
</dbReference>
<dbReference type="HPA" id="ENSG00000152580">
    <property type="expression patterns" value="Tissue enhanced (gallbladder, ovary)"/>
</dbReference>
<dbReference type="MalaCards" id="IGSF10"/>
<dbReference type="MIM" id="617351">
    <property type="type" value="gene"/>
</dbReference>
<dbReference type="neXtProt" id="NX_Q6WRI0"/>
<dbReference type="OpenTargets" id="ENSG00000152580"/>
<dbReference type="PharmGKB" id="PA134900760"/>
<dbReference type="VEuPathDB" id="HostDB:ENSG00000152580"/>
<dbReference type="eggNOG" id="KOG0619">
    <property type="taxonomic scope" value="Eukaryota"/>
</dbReference>
<dbReference type="GeneTree" id="ENSGT00940000158290"/>
<dbReference type="HOGENOM" id="CLU_000580_0_0_1"/>
<dbReference type="InParanoid" id="Q6WRI0"/>
<dbReference type="OMA" id="VTWIMPD"/>
<dbReference type="OrthoDB" id="10062932at2759"/>
<dbReference type="PAN-GO" id="Q6WRI0">
    <property type="GO annotations" value="1 GO annotation based on evolutionary models"/>
</dbReference>
<dbReference type="PhylomeDB" id="Q6WRI0"/>
<dbReference type="TreeFam" id="TF326318"/>
<dbReference type="PathwayCommons" id="Q6WRI0"/>
<dbReference type="SignaLink" id="Q6WRI0"/>
<dbReference type="BioGRID-ORCS" id="285313">
    <property type="hits" value="7 hits in 1143 CRISPR screens"/>
</dbReference>
<dbReference type="ChiTaRS" id="IGSF10">
    <property type="organism name" value="human"/>
</dbReference>
<dbReference type="GenomeRNAi" id="285313"/>
<dbReference type="Pharos" id="Q6WRI0">
    <property type="development level" value="Tbio"/>
</dbReference>
<dbReference type="PRO" id="PR:Q6WRI0"/>
<dbReference type="Proteomes" id="UP000005640">
    <property type="component" value="Chromosome 3"/>
</dbReference>
<dbReference type="RNAct" id="Q6WRI0">
    <property type="molecule type" value="protein"/>
</dbReference>
<dbReference type="Bgee" id="ENSG00000152580">
    <property type="expression patterns" value="Expressed in cardiac muscle of right atrium and 155 other cell types or tissues"/>
</dbReference>
<dbReference type="ExpressionAtlas" id="Q6WRI0">
    <property type="expression patterns" value="baseline and differential"/>
</dbReference>
<dbReference type="GO" id="GO:0005576">
    <property type="term" value="C:extracellular region"/>
    <property type="evidence" value="ECO:0000314"/>
    <property type="project" value="UniProtKB"/>
</dbReference>
<dbReference type="GO" id="GO:0030154">
    <property type="term" value="P:cell differentiation"/>
    <property type="evidence" value="ECO:0007669"/>
    <property type="project" value="UniProtKB-KW"/>
</dbReference>
<dbReference type="GO" id="GO:0001503">
    <property type="term" value="P:ossification"/>
    <property type="evidence" value="ECO:0007669"/>
    <property type="project" value="UniProtKB-KW"/>
</dbReference>
<dbReference type="GO" id="GO:2001222">
    <property type="term" value="P:regulation of neuron migration"/>
    <property type="evidence" value="ECO:0000250"/>
    <property type="project" value="UniProtKB"/>
</dbReference>
<dbReference type="CDD" id="cd00096">
    <property type="entry name" value="Ig"/>
    <property type="match status" value="1"/>
</dbReference>
<dbReference type="FunFam" id="2.60.40.10:FF:000621">
    <property type="entry name" value="Immunoglobulin superfamily member 10"/>
    <property type="match status" value="1"/>
</dbReference>
<dbReference type="FunFam" id="2.60.40.10:FF:001046">
    <property type="entry name" value="Immunoglobulin superfamily member 10"/>
    <property type="match status" value="1"/>
</dbReference>
<dbReference type="FunFam" id="2.60.40.10:FF:001065">
    <property type="entry name" value="Immunoglobulin superfamily member 10"/>
    <property type="match status" value="1"/>
</dbReference>
<dbReference type="FunFam" id="2.60.40.10:FF:001188">
    <property type="entry name" value="Immunoglobulin superfamily member 10"/>
    <property type="match status" value="1"/>
</dbReference>
<dbReference type="FunFam" id="2.60.40.10:FF:001224">
    <property type="entry name" value="Immunoglobulin superfamily member 10"/>
    <property type="match status" value="1"/>
</dbReference>
<dbReference type="FunFam" id="2.60.40.10:FF:001262">
    <property type="entry name" value="Immunoglobulin superfamily member 10"/>
    <property type="match status" value="1"/>
</dbReference>
<dbReference type="FunFam" id="2.60.40.10:FF:001373">
    <property type="entry name" value="Immunoglobulin superfamily member 10"/>
    <property type="match status" value="1"/>
</dbReference>
<dbReference type="FunFam" id="2.60.40.10:FF:001427">
    <property type="entry name" value="Immunoglobulin superfamily member 10"/>
    <property type="match status" value="1"/>
</dbReference>
<dbReference type="FunFam" id="3.80.10.10:FF:000103">
    <property type="entry name" value="Immunoglobulin superfamily member 10"/>
    <property type="match status" value="1"/>
</dbReference>
<dbReference type="FunFam" id="3.80.10.10:FF:000227">
    <property type="entry name" value="Immunoglobulin superfamily member 10"/>
    <property type="match status" value="1"/>
</dbReference>
<dbReference type="FunFam" id="2.60.40.10:FF:000537">
    <property type="entry name" value="immunoglobulin superfamily member 10"/>
    <property type="match status" value="1"/>
</dbReference>
<dbReference type="FunFam" id="2.60.40.10:FF:000925">
    <property type="entry name" value="immunoglobulin superfamily member 10"/>
    <property type="match status" value="1"/>
</dbReference>
<dbReference type="FunFam" id="2.60.40.10:FF:001187">
    <property type="entry name" value="immunoglobulin superfamily member 10"/>
    <property type="match status" value="1"/>
</dbReference>
<dbReference type="FunFam" id="2.60.40.10:FF:001323">
    <property type="entry name" value="immunoglobulin superfamily member 10"/>
    <property type="match status" value="1"/>
</dbReference>
<dbReference type="Gene3D" id="2.60.40.10">
    <property type="entry name" value="Immunoglobulins"/>
    <property type="match status" value="12"/>
</dbReference>
<dbReference type="Gene3D" id="3.80.10.10">
    <property type="entry name" value="Ribonuclease Inhibitor"/>
    <property type="match status" value="2"/>
</dbReference>
<dbReference type="InterPro" id="IPR000483">
    <property type="entry name" value="Cys-rich_flank_reg_C"/>
</dbReference>
<dbReference type="InterPro" id="IPR007110">
    <property type="entry name" value="Ig-like_dom"/>
</dbReference>
<dbReference type="InterPro" id="IPR036179">
    <property type="entry name" value="Ig-like_dom_sf"/>
</dbReference>
<dbReference type="InterPro" id="IPR013783">
    <property type="entry name" value="Ig-like_fold"/>
</dbReference>
<dbReference type="InterPro" id="IPR013098">
    <property type="entry name" value="Ig_I-set"/>
</dbReference>
<dbReference type="InterPro" id="IPR003599">
    <property type="entry name" value="Ig_sub"/>
</dbReference>
<dbReference type="InterPro" id="IPR003598">
    <property type="entry name" value="Ig_sub2"/>
</dbReference>
<dbReference type="InterPro" id="IPR013106">
    <property type="entry name" value="Ig_V-set"/>
</dbReference>
<dbReference type="InterPro" id="IPR001611">
    <property type="entry name" value="Leu-rich_rpt"/>
</dbReference>
<dbReference type="InterPro" id="IPR003591">
    <property type="entry name" value="Leu-rich_rpt_typical-subtyp"/>
</dbReference>
<dbReference type="InterPro" id="IPR050467">
    <property type="entry name" value="LRFN"/>
</dbReference>
<dbReference type="InterPro" id="IPR032675">
    <property type="entry name" value="LRR_dom_sf"/>
</dbReference>
<dbReference type="InterPro" id="IPR000372">
    <property type="entry name" value="LRRNT"/>
</dbReference>
<dbReference type="PANTHER" id="PTHR45842:SF12">
    <property type="entry name" value="KEKKON 5, ISOFORM A"/>
    <property type="match status" value="1"/>
</dbReference>
<dbReference type="PANTHER" id="PTHR45842">
    <property type="entry name" value="SYNAPTIC ADHESION-LIKE MOLECULE SALM"/>
    <property type="match status" value="1"/>
</dbReference>
<dbReference type="Pfam" id="PF07679">
    <property type="entry name" value="I-set"/>
    <property type="match status" value="5"/>
</dbReference>
<dbReference type="Pfam" id="PF13927">
    <property type="entry name" value="Ig_3"/>
    <property type="match status" value="7"/>
</dbReference>
<dbReference type="Pfam" id="PF13855">
    <property type="entry name" value="LRR_8"/>
    <property type="match status" value="1"/>
</dbReference>
<dbReference type="SMART" id="SM00409">
    <property type="entry name" value="IG"/>
    <property type="match status" value="12"/>
</dbReference>
<dbReference type="SMART" id="SM00408">
    <property type="entry name" value="IGc2"/>
    <property type="match status" value="12"/>
</dbReference>
<dbReference type="SMART" id="SM00406">
    <property type="entry name" value="IGv"/>
    <property type="match status" value="7"/>
</dbReference>
<dbReference type="SMART" id="SM00369">
    <property type="entry name" value="LRR_TYP"/>
    <property type="match status" value="6"/>
</dbReference>
<dbReference type="SMART" id="SM00082">
    <property type="entry name" value="LRRCT"/>
    <property type="match status" value="1"/>
</dbReference>
<dbReference type="SMART" id="SM00013">
    <property type="entry name" value="LRRNT"/>
    <property type="match status" value="1"/>
</dbReference>
<dbReference type="SUPFAM" id="SSF48726">
    <property type="entry name" value="Immunoglobulin"/>
    <property type="match status" value="12"/>
</dbReference>
<dbReference type="SUPFAM" id="SSF52058">
    <property type="entry name" value="L domain-like"/>
    <property type="match status" value="1"/>
</dbReference>
<dbReference type="PROSITE" id="PS50835">
    <property type="entry name" value="IG_LIKE"/>
    <property type="match status" value="12"/>
</dbReference>
<gene>
    <name type="primary">IGSF10</name>
    <name type="synonym">CMF608</name>
</gene>
<comment type="function">
    <text evidence="1 2">Involved in the control of early migration of neurons expressing gonadotropin-releasing hormone (GNRH neurons) (By similarity). May be involved in the maintenance of osteochondroprogenitor cells pool (By similarity).</text>
</comment>
<comment type="subcellular location">
    <subcellularLocation>
        <location evidence="6">Secreted</location>
    </subcellularLocation>
</comment>
<comment type="alternative products">
    <event type="alternative splicing"/>
    <isoform>
        <id>Q6WRI0-1</id>
        <name>1</name>
        <sequence type="displayed"/>
    </isoform>
    <isoform>
        <id>Q6WRI0-2</id>
        <name>2</name>
        <sequence type="described" ref="VSP_025195 VSP_025196"/>
    </isoform>
    <isoform>
        <id>Q6WRI0-3</id>
        <name>3</name>
        <sequence type="described" ref="VSP_025194"/>
    </isoform>
</comment>
<comment type="disease">
    <text evidence="6">Mutations in IGSF10 may be a cause of self-limited delayed puberty. This common condition is defined as the absence of testicular enlargement in boys or breast development in girls at an age that is 2-2.5 standard deviations later than the population mean. Self-limited delayed puberty segregates within families, with the majority of families displaying an autosomal dominant pattern of inheritance.</text>
</comment>
<comment type="sequence caution" evidence="9">
    <conflict type="erroneous initiation">
        <sequence resource="EMBL-CDS" id="BAC05429"/>
    </conflict>
</comment>
<keyword id="KW-0025">Alternative splicing</keyword>
<keyword id="KW-0217">Developmental protein</keyword>
<keyword id="KW-0221">Differentiation</keyword>
<keyword id="KW-0225">Disease variant</keyword>
<keyword id="KW-1015">Disulfide bond</keyword>
<keyword id="KW-0325">Glycoprotein</keyword>
<keyword id="KW-0393">Immunoglobulin domain</keyword>
<keyword id="KW-0433">Leucine-rich repeat</keyword>
<keyword id="KW-0892">Osteogenesis</keyword>
<keyword id="KW-0597">Phosphoprotein</keyword>
<keyword id="KW-1267">Proteomics identification</keyword>
<keyword id="KW-1185">Reference proteome</keyword>
<keyword id="KW-0677">Repeat</keyword>
<keyword id="KW-0964">Secreted</keyword>
<keyword id="KW-0732">Signal</keyword>
<name>IGS10_HUMAN</name>
<accession>Q6WRI0</accession>
<accession>Q86YJ9</accession>
<accession>Q8N772</accession>
<accession>Q8NA84</accession>